<evidence type="ECO:0000255" key="1">
    <source>
        <dbReference type="HAMAP-Rule" id="MF_00334"/>
    </source>
</evidence>
<proteinExistence type="inferred from homology"/>
<name>HGD_BORPE</name>
<protein>
    <recommendedName>
        <fullName evidence="1">Homogentisate 1,2-dioxygenase</fullName>
        <shortName evidence="1">HGDO</shortName>
        <ecNumber evidence="1">1.13.11.5</ecNumber>
    </recommendedName>
    <alternativeName>
        <fullName evidence="1">Homogentisate oxygenase</fullName>
    </alternativeName>
    <alternativeName>
        <fullName evidence="1">Homogentisic acid oxidase</fullName>
    </alternativeName>
    <alternativeName>
        <fullName evidence="1">Homogentisicase</fullName>
    </alternativeName>
</protein>
<dbReference type="EC" id="1.13.11.5" evidence="1"/>
<dbReference type="EMBL" id="BX640420">
    <property type="protein sequence ID" value="CAE43401.1"/>
    <property type="molecule type" value="Genomic_DNA"/>
</dbReference>
<dbReference type="RefSeq" id="NP_881699.1">
    <property type="nucleotide sequence ID" value="NC_002929.2"/>
</dbReference>
<dbReference type="RefSeq" id="WP_003818930.1">
    <property type="nucleotide sequence ID" value="NZ_CP039022.1"/>
</dbReference>
<dbReference type="SMR" id="Q7VUG2"/>
<dbReference type="STRING" id="257313.BP3134"/>
<dbReference type="PaxDb" id="257313-BP3134"/>
<dbReference type="GeneID" id="69603062"/>
<dbReference type="KEGG" id="bpe:BP3134"/>
<dbReference type="PATRIC" id="fig|257313.5.peg.3385"/>
<dbReference type="eggNOG" id="COG3508">
    <property type="taxonomic scope" value="Bacteria"/>
</dbReference>
<dbReference type="HOGENOM" id="CLU_027174_0_0_4"/>
<dbReference type="UniPathway" id="UPA00139">
    <property type="reaction ID" value="UER00339"/>
</dbReference>
<dbReference type="Proteomes" id="UP000002676">
    <property type="component" value="Chromosome"/>
</dbReference>
<dbReference type="GO" id="GO:0005737">
    <property type="term" value="C:cytoplasm"/>
    <property type="evidence" value="ECO:0007669"/>
    <property type="project" value="TreeGrafter"/>
</dbReference>
<dbReference type="GO" id="GO:0004411">
    <property type="term" value="F:homogentisate 1,2-dioxygenase activity"/>
    <property type="evidence" value="ECO:0007669"/>
    <property type="project" value="UniProtKB-UniRule"/>
</dbReference>
<dbReference type="GO" id="GO:0005506">
    <property type="term" value="F:iron ion binding"/>
    <property type="evidence" value="ECO:0007669"/>
    <property type="project" value="UniProtKB-UniRule"/>
</dbReference>
<dbReference type="GO" id="GO:0006559">
    <property type="term" value="P:L-phenylalanine catabolic process"/>
    <property type="evidence" value="ECO:0007669"/>
    <property type="project" value="UniProtKB-UniRule"/>
</dbReference>
<dbReference type="GO" id="GO:0006572">
    <property type="term" value="P:tyrosine catabolic process"/>
    <property type="evidence" value="ECO:0007669"/>
    <property type="project" value="UniProtKB-UniRule"/>
</dbReference>
<dbReference type="CDD" id="cd07000">
    <property type="entry name" value="cupin_HGO_N"/>
    <property type="match status" value="1"/>
</dbReference>
<dbReference type="FunFam" id="2.60.120.10:FF:000034">
    <property type="entry name" value="Homogentisate 1,2-dioxygenase"/>
    <property type="match status" value="1"/>
</dbReference>
<dbReference type="Gene3D" id="2.60.120.10">
    <property type="entry name" value="Jelly Rolls"/>
    <property type="match status" value="1"/>
</dbReference>
<dbReference type="HAMAP" id="MF_00334">
    <property type="entry name" value="Homogentis_dioxygen"/>
    <property type="match status" value="1"/>
</dbReference>
<dbReference type="InterPro" id="IPR046451">
    <property type="entry name" value="HgmA_C"/>
</dbReference>
<dbReference type="InterPro" id="IPR046452">
    <property type="entry name" value="HgmA_N"/>
</dbReference>
<dbReference type="InterPro" id="IPR005708">
    <property type="entry name" value="Homogentis_dOase"/>
</dbReference>
<dbReference type="InterPro" id="IPR022950">
    <property type="entry name" value="Homogentis_dOase_bac"/>
</dbReference>
<dbReference type="InterPro" id="IPR014710">
    <property type="entry name" value="RmlC-like_jellyroll"/>
</dbReference>
<dbReference type="InterPro" id="IPR011051">
    <property type="entry name" value="RmlC_Cupin_sf"/>
</dbReference>
<dbReference type="NCBIfam" id="TIGR01015">
    <property type="entry name" value="hmgA"/>
    <property type="match status" value="1"/>
</dbReference>
<dbReference type="PANTHER" id="PTHR11056">
    <property type="entry name" value="HOMOGENTISATE 1,2-DIOXYGENASE"/>
    <property type="match status" value="1"/>
</dbReference>
<dbReference type="PANTHER" id="PTHR11056:SF0">
    <property type="entry name" value="HOMOGENTISATE 1,2-DIOXYGENASE"/>
    <property type="match status" value="1"/>
</dbReference>
<dbReference type="Pfam" id="PF04209">
    <property type="entry name" value="HgmA_C"/>
    <property type="match status" value="1"/>
</dbReference>
<dbReference type="Pfam" id="PF20510">
    <property type="entry name" value="HgmA_N"/>
    <property type="match status" value="1"/>
</dbReference>
<dbReference type="SUPFAM" id="SSF51182">
    <property type="entry name" value="RmlC-like cupins"/>
    <property type="match status" value="1"/>
</dbReference>
<organism>
    <name type="scientific">Bordetella pertussis (strain Tohama I / ATCC BAA-589 / NCTC 13251)</name>
    <dbReference type="NCBI Taxonomy" id="257313"/>
    <lineage>
        <taxon>Bacteria</taxon>
        <taxon>Pseudomonadati</taxon>
        <taxon>Pseudomonadota</taxon>
        <taxon>Betaproteobacteria</taxon>
        <taxon>Burkholderiales</taxon>
        <taxon>Alcaligenaceae</taxon>
        <taxon>Bordetella</taxon>
    </lineage>
</organism>
<gene>
    <name evidence="1" type="primary">hmgA</name>
    <name type="ordered locus">BP3134</name>
</gene>
<comment type="function">
    <text evidence="1">Involved in the catabolism of homogentisate (2,5-dihydroxyphenylacetate or 2,5-OH-PhAc), a central intermediate in the degradation of phenylalanine and tyrosine. Catalyzes the oxidative ring cleavage of the aromatic ring of homogentisate to yield maleylacetoacetate.</text>
</comment>
<comment type="catalytic activity">
    <reaction evidence="1">
        <text>homogentisate + O2 = 4-maleylacetoacetate + H(+)</text>
        <dbReference type="Rhea" id="RHEA:15449"/>
        <dbReference type="ChEBI" id="CHEBI:15378"/>
        <dbReference type="ChEBI" id="CHEBI:15379"/>
        <dbReference type="ChEBI" id="CHEBI:16169"/>
        <dbReference type="ChEBI" id="CHEBI:17105"/>
        <dbReference type="EC" id="1.13.11.5"/>
    </reaction>
</comment>
<comment type="cofactor">
    <cofactor evidence="1">
        <name>Fe cation</name>
        <dbReference type="ChEBI" id="CHEBI:24875"/>
    </cofactor>
</comment>
<comment type="pathway">
    <text evidence="1">Amino-acid degradation; L-phenylalanine degradation; acetoacetate and fumarate from L-phenylalanine: step 4/6.</text>
</comment>
<comment type="subunit">
    <text evidence="1">Hexamer; dimer of trimers.</text>
</comment>
<comment type="similarity">
    <text evidence="1">Belongs to the homogentisate dioxygenase family.</text>
</comment>
<sequence>MSLHYQTGFGNACATEALPGALPAGRNSPQICPYGLYAEQLSGTAFTAPRAENRRSWLYRIRPGVQHLPFAPFAGAQRWLSDFGRQPVTPNQLRWSPLPMPDAPTDFIDGMHTWGGNGGPEEQSGVGIHLYAANRSMQGRFFYNADGEMLIVPQQGRLRLATELGLIDIEPYEIAVVPRGVRLRVELLDDVARGYVLENFGTAMRLPELGPIGSNCLANARDFQIPVAWYEDVEGDFELIAKFTGGFWRAPITHSPLNVVAWHGTHAPYKYDLRNFNTVGSISYDHPDPSIFTVLTSPSDTPGTANMDFAIFPPRILAMENTFRPPWFHRNIASEFMGLIHGVYDAKAEGFAPGGASLHNCMSGHGPDADTFEKASHADTSQAHYIRDTMAFMFETRRVIRPTAQALASPQRQDDYYQCWQGLQKHFDPEQA</sequence>
<feature type="chain" id="PRO_0000225784" description="Homogentisate 1,2-dioxygenase">
    <location>
        <begin position="1"/>
        <end position="432"/>
    </location>
</feature>
<feature type="active site" description="Proton acceptor" evidence="1">
    <location>
        <position position="286"/>
    </location>
</feature>
<feature type="binding site" evidence="1">
    <location>
        <position position="329"/>
    </location>
    <ligand>
        <name>Fe cation</name>
        <dbReference type="ChEBI" id="CHEBI:24875"/>
    </ligand>
</feature>
<feature type="binding site" evidence="1">
    <location>
        <position position="335"/>
    </location>
    <ligand>
        <name>Fe cation</name>
        <dbReference type="ChEBI" id="CHEBI:24875"/>
    </ligand>
</feature>
<feature type="binding site" evidence="1">
    <location>
        <position position="344"/>
    </location>
    <ligand>
        <name>homogentisate</name>
        <dbReference type="ChEBI" id="CHEBI:16169"/>
    </ligand>
</feature>
<feature type="binding site" evidence="1">
    <location>
        <position position="365"/>
    </location>
    <ligand>
        <name>Fe cation</name>
        <dbReference type="ChEBI" id="CHEBI:24875"/>
    </ligand>
</feature>
<feature type="binding site" evidence="1">
    <location>
        <position position="365"/>
    </location>
    <ligand>
        <name>homogentisate</name>
        <dbReference type="ChEBI" id="CHEBI:16169"/>
    </ligand>
</feature>
<reference key="1">
    <citation type="journal article" date="2003" name="Nat. Genet.">
        <title>Comparative analysis of the genome sequences of Bordetella pertussis, Bordetella parapertussis and Bordetella bronchiseptica.</title>
        <authorList>
            <person name="Parkhill J."/>
            <person name="Sebaihia M."/>
            <person name="Preston A."/>
            <person name="Murphy L.D."/>
            <person name="Thomson N.R."/>
            <person name="Harris D.E."/>
            <person name="Holden M.T.G."/>
            <person name="Churcher C.M."/>
            <person name="Bentley S.D."/>
            <person name="Mungall K.L."/>
            <person name="Cerdeno-Tarraga A.-M."/>
            <person name="Temple L."/>
            <person name="James K.D."/>
            <person name="Harris B."/>
            <person name="Quail M.A."/>
            <person name="Achtman M."/>
            <person name="Atkin R."/>
            <person name="Baker S."/>
            <person name="Basham D."/>
            <person name="Bason N."/>
            <person name="Cherevach I."/>
            <person name="Chillingworth T."/>
            <person name="Collins M."/>
            <person name="Cronin A."/>
            <person name="Davis P."/>
            <person name="Doggett J."/>
            <person name="Feltwell T."/>
            <person name="Goble A."/>
            <person name="Hamlin N."/>
            <person name="Hauser H."/>
            <person name="Holroyd S."/>
            <person name="Jagels K."/>
            <person name="Leather S."/>
            <person name="Moule S."/>
            <person name="Norberczak H."/>
            <person name="O'Neil S."/>
            <person name="Ormond D."/>
            <person name="Price C."/>
            <person name="Rabbinowitsch E."/>
            <person name="Rutter S."/>
            <person name="Sanders M."/>
            <person name="Saunders D."/>
            <person name="Seeger K."/>
            <person name="Sharp S."/>
            <person name="Simmonds M."/>
            <person name="Skelton J."/>
            <person name="Squares R."/>
            <person name="Squares S."/>
            <person name="Stevens K."/>
            <person name="Unwin L."/>
            <person name="Whitehead S."/>
            <person name="Barrell B.G."/>
            <person name="Maskell D.J."/>
        </authorList>
    </citation>
    <scope>NUCLEOTIDE SEQUENCE [LARGE SCALE GENOMIC DNA]</scope>
    <source>
        <strain>Tohama I / ATCC BAA-589 / NCTC 13251</strain>
    </source>
</reference>
<accession>Q7VUG2</accession>
<keyword id="KW-0223">Dioxygenase</keyword>
<keyword id="KW-0408">Iron</keyword>
<keyword id="KW-0479">Metal-binding</keyword>
<keyword id="KW-0560">Oxidoreductase</keyword>
<keyword id="KW-0585">Phenylalanine catabolism</keyword>
<keyword id="KW-1185">Reference proteome</keyword>
<keyword id="KW-0828">Tyrosine catabolism</keyword>